<comment type="function">
    <text evidence="2">Regulatory subunit of the calcium-regulated non-lysosomal thiol-protease which catalyzes limited proteolysis of substrates involved in cytoskeletal remodeling and signal transduction. Essential for embryonic development (By similarity).</text>
</comment>
<comment type="subunit">
    <text evidence="6">Homodimer or heterodimer of a large (catalytic) and a small (regulatory) subunit. In presence of calcium, the heterodimer dissociates.</text>
</comment>
<comment type="subcellular location">
    <subcellularLocation>
        <location evidence="1">Cytoplasm</location>
    </subcellularLocation>
    <subcellularLocation>
        <location evidence="1">Cell membrane</location>
    </subcellularLocation>
    <text evidence="1">Translocates to the plasma membrane upon calcium binding.</text>
</comment>
<comment type="domain">
    <text>The contact of the 5th EF-hand domain from each monomer allows the formation of the homodimer and also appears to mediate the contact between the large catalytic subunit and small regulatory subunit for the formation of the heterodimer.</text>
</comment>
<comment type="domain">
    <text>EF-hand domains are paired. EF-hand 1 is paired with EF-hand 2 and EF-hand 3 is paired with EF-hand 4. The fifth EF-hand domain, left unpaired, does not bind the calcium but is responsible of the dimerization by EF-embrace. The first four EF-hand domains bind calcium, however it is not sure if the binding of EF-hand 4 to calcium is physiologically relevant.</text>
</comment>
<accession>P04574</accession>
<accession>Q8SPJ8</accession>
<sequence>MFLVNSFLKGGGGGGGGGGGLGGGLGNVLGGLISGAGGGGGGGGGGGGGGGGGGTAMRILGGVISAISEAAAQYNPEPPPPRTHYSNIEANESEEVRQFRRLFAQLAGDDMEVSATELMNILNKVVTRHPDLKTDGFGIDTCRSMVAVMDSDTTGKLGFEEFKYLWNNIKKWQAIYKQFDVDRSGTIGSSELPGAFEAAGFHLNEHLYSMIIRRYSDEGGNMDFDNFISCLVRLDAMFRAFKSLDKDGTGQIQVNIQEWLQLTMYS</sequence>
<keyword id="KW-0002">3D-structure</keyword>
<keyword id="KW-0007">Acetylation</keyword>
<keyword id="KW-0106">Calcium</keyword>
<keyword id="KW-1003">Cell membrane</keyword>
<keyword id="KW-0963">Cytoplasm</keyword>
<keyword id="KW-0472">Membrane</keyword>
<keyword id="KW-0479">Metal-binding</keyword>
<keyword id="KW-0597">Phosphoprotein</keyword>
<keyword id="KW-1185">Reference proteome</keyword>
<keyword id="KW-0677">Repeat</keyword>
<proteinExistence type="evidence at protein level"/>
<protein>
    <recommendedName>
        <fullName>Calpain small subunit 1</fullName>
        <shortName>CSS1</shortName>
    </recommendedName>
    <alternativeName>
        <fullName>Calcium-activated neutral proteinase small subunit</fullName>
        <shortName>CANP small subunit</shortName>
    </alternativeName>
    <alternativeName>
        <fullName>Calcium-dependent protease small subunit</fullName>
        <shortName>CDPS</shortName>
    </alternativeName>
    <alternativeName>
        <fullName>Calcium-dependent protease small subunit 1</fullName>
    </alternativeName>
    <alternativeName>
        <fullName>Calpain regulatory subunit</fullName>
    </alternativeName>
</protein>
<reference key="1">
    <citation type="journal article" date="1985" name="Proc. Natl. Acad. Sci. U.S.A.">
        <title>A putative Ca2+-binding protein: structure of the light subunit of porcine calpain elucidated by molecular cloning and protein sequence analysis.</title>
        <authorList>
            <person name="Sakihama T."/>
            <person name="Kakidani H."/>
            <person name="Zenita K."/>
            <person name="Yumoto N."/>
            <person name="Kikuchi T."/>
            <person name="Sasaki T."/>
            <person name="Kannagi R."/>
            <person name="Nakanishi S."/>
            <person name="Ohmori M."/>
            <person name="Takio K."/>
            <person name="Titani K."/>
            <person name="Murachi T."/>
        </authorList>
    </citation>
    <scope>NUCLEOTIDE SEQUENCE [MRNA]</scope>
</reference>
<reference key="2">
    <citation type="submission" date="2002-10" db="EMBL/GenBank/DDBJ databases">
        <authorList>
            <person name="Leeb T."/>
        </authorList>
    </citation>
    <scope>NUCLEOTIDE SEQUENCE [GENOMIC DNA]</scope>
</reference>
<reference key="3">
    <citation type="journal article" date="1997" name="Nat. Struct. Biol.">
        <title>Crystal structure of calcium bound domain VI of calpain at 1.9-A resolution and its role in enzyme assembly, regulation, and inhibitor binding.</title>
        <authorList>
            <person name="Lin G.D."/>
            <person name="Chattopadhyay D."/>
            <person name="Maki M."/>
            <person name="Wang K.K."/>
            <person name="Carson M."/>
            <person name="Jin L."/>
            <person name="Yuen P.W."/>
            <person name="Takano E."/>
            <person name="Hatanaka M."/>
            <person name="Delucas L.J."/>
            <person name="Narayana S.V."/>
        </authorList>
    </citation>
    <scope>X-RAY CRYSTALLOGRAPHY (1.9 ANGSTROMS) OF 94-266</scope>
    <scope>DOMAIN</scope>
    <scope>CALCIUM-BINDING SITES</scope>
</reference>
<reference key="4">
    <citation type="journal article" date="2003" name="J. Mol. Biol.">
        <title>A structural model for the inhibition of calpain by calpastatin: crystal structures of the native domain VI of calpain and its complexes with calpastatin peptide and a small molecule inhibitor.</title>
        <authorList>
            <person name="Todd B."/>
            <person name="Moore D."/>
            <person name="Deivanayagam C.C."/>
            <person name="Lin G.D."/>
            <person name="Chattopadhyay D."/>
            <person name="Maki M."/>
            <person name="Wang K.K."/>
            <person name="Narayana S.V."/>
        </authorList>
    </citation>
    <scope>X-RAY CRYSTALLOGRAPHY (2.3 ANGSTROMS) OF 94-266 IN COMPLEX WITH INHIBITOR</scope>
    <scope>DOMAIN</scope>
    <scope>CALCIUM-BINDING SITES</scope>
</reference>
<name>CPNS1_PIG</name>
<organism>
    <name type="scientific">Sus scrofa</name>
    <name type="common">Pig</name>
    <dbReference type="NCBI Taxonomy" id="9823"/>
    <lineage>
        <taxon>Eukaryota</taxon>
        <taxon>Metazoa</taxon>
        <taxon>Chordata</taxon>
        <taxon>Craniata</taxon>
        <taxon>Vertebrata</taxon>
        <taxon>Euteleostomi</taxon>
        <taxon>Mammalia</taxon>
        <taxon>Eutheria</taxon>
        <taxon>Laurasiatheria</taxon>
        <taxon>Artiodactyla</taxon>
        <taxon>Suina</taxon>
        <taxon>Suidae</taxon>
        <taxon>Sus</taxon>
    </lineage>
</organism>
<evidence type="ECO:0000250" key="1"/>
<evidence type="ECO:0000250" key="2">
    <source>
        <dbReference type="UniProtKB" id="O88456"/>
    </source>
</evidence>
<evidence type="ECO:0000250" key="3">
    <source>
        <dbReference type="UniProtKB" id="P04632"/>
    </source>
</evidence>
<evidence type="ECO:0000250" key="4">
    <source>
        <dbReference type="UniProtKB" id="Q64537"/>
    </source>
</evidence>
<evidence type="ECO:0000255" key="5">
    <source>
        <dbReference type="PROSITE-ProRule" id="PRU00448"/>
    </source>
</evidence>
<evidence type="ECO:0000269" key="6">
    <source>
    </source>
</evidence>
<evidence type="ECO:0000305" key="7"/>
<evidence type="ECO:0007829" key="8">
    <source>
        <dbReference type="PDB" id="1ALV"/>
    </source>
</evidence>
<evidence type="ECO:0007829" key="9">
    <source>
        <dbReference type="PDB" id="4PHN"/>
    </source>
</evidence>
<gene>
    <name type="primary">CAPNS1</name>
    <name type="synonym">CAPN4</name>
</gene>
<dbReference type="EMBL" id="M11778">
    <property type="protein sequence ID" value="AAA31010.1"/>
    <property type="molecule type" value="mRNA"/>
</dbReference>
<dbReference type="EMBL" id="M11779">
    <property type="protein sequence ID" value="AAA31011.1"/>
    <property type="molecule type" value="mRNA"/>
</dbReference>
<dbReference type="EMBL" id="AJ410870">
    <property type="protein sequence ID" value="CAC85483.2"/>
    <property type="molecule type" value="Genomic_DNA"/>
</dbReference>
<dbReference type="PIR" id="A25166">
    <property type="entry name" value="CIPGL"/>
</dbReference>
<dbReference type="PIR" id="S39392">
    <property type="entry name" value="S39392"/>
</dbReference>
<dbReference type="RefSeq" id="NP_999483.1">
    <property type="nucleotide sequence ID" value="NM_214318.2"/>
</dbReference>
<dbReference type="PDB" id="1ALV">
    <property type="method" value="X-ray"/>
    <property type="resolution" value="1.90 A"/>
    <property type="chains" value="A/B=94-266"/>
</dbReference>
<dbReference type="PDB" id="1ALW">
    <property type="method" value="X-ray"/>
    <property type="resolution" value="2.03 A"/>
    <property type="chains" value="A/B=94-266"/>
</dbReference>
<dbReference type="PDB" id="1NX0">
    <property type="method" value="X-ray"/>
    <property type="resolution" value="2.30 A"/>
    <property type="chains" value="A/B=94-266"/>
</dbReference>
<dbReference type="PDB" id="1NX1">
    <property type="method" value="X-ray"/>
    <property type="resolution" value="2.00 A"/>
    <property type="chains" value="A/B=94-266"/>
</dbReference>
<dbReference type="PDB" id="1NX2">
    <property type="method" value="X-ray"/>
    <property type="resolution" value="2.20 A"/>
    <property type="chains" value="A=94-266"/>
</dbReference>
<dbReference type="PDB" id="1NX3">
    <property type="method" value="X-ray"/>
    <property type="resolution" value="2.45 A"/>
    <property type="chains" value="A=94-266"/>
</dbReference>
<dbReference type="PDB" id="4PHN">
    <property type="method" value="X-ray"/>
    <property type="resolution" value="1.79 A"/>
    <property type="chains" value="A/B=94-266"/>
</dbReference>
<dbReference type="PDBsum" id="1ALV"/>
<dbReference type="PDBsum" id="1ALW"/>
<dbReference type="PDBsum" id="1NX0"/>
<dbReference type="PDBsum" id="1NX1"/>
<dbReference type="PDBsum" id="1NX2"/>
<dbReference type="PDBsum" id="1NX3"/>
<dbReference type="PDBsum" id="4PHN"/>
<dbReference type="SMR" id="P04574"/>
<dbReference type="FunCoup" id="P04574">
    <property type="interactions" value="1472"/>
</dbReference>
<dbReference type="IntAct" id="P04574">
    <property type="interactions" value="1"/>
</dbReference>
<dbReference type="STRING" id="9823.ENSSSCP00000025968"/>
<dbReference type="BindingDB" id="P04574"/>
<dbReference type="ChEMBL" id="CHEMBL2205"/>
<dbReference type="PaxDb" id="9823-ENSSSCP00000025968"/>
<dbReference type="PeptideAtlas" id="P04574"/>
<dbReference type="Ensembl" id="ENSSSCT00025084678.1">
    <property type="protein sequence ID" value="ENSSSCP00025036836.1"/>
    <property type="gene ID" value="ENSSSCG00025061681.1"/>
</dbReference>
<dbReference type="Ensembl" id="ENSSSCT00030034851.1">
    <property type="protein sequence ID" value="ENSSSCP00030015901.1"/>
    <property type="gene ID" value="ENSSSCG00030024958.1"/>
</dbReference>
<dbReference type="Ensembl" id="ENSSSCT00035044573.1">
    <property type="protein sequence ID" value="ENSSSCP00035017837.1"/>
    <property type="gene ID" value="ENSSSCG00035033634.1"/>
</dbReference>
<dbReference type="Ensembl" id="ENSSSCT00040103090.1">
    <property type="protein sequence ID" value="ENSSSCP00040046648.1"/>
    <property type="gene ID" value="ENSSSCG00040074544.1"/>
</dbReference>
<dbReference type="Ensembl" id="ENSSSCT00045065012.1">
    <property type="protein sequence ID" value="ENSSSCP00045045985.1"/>
    <property type="gene ID" value="ENSSSCG00045037628.1"/>
</dbReference>
<dbReference type="Ensembl" id="ENSSSCT00050032028.1">
    <property type="protein sequence ID" value="ENSSSCP00050013378.1"/>
    <property type="gene ID" value="ENSSSCG00050023744.1"/>
</dbReference>
<dbReference type="Ensembl" id="ENSSSCT00055045351.1">
    <property type="protein sequence ID" value="ENSSSCP00055036144.1"/>
    <property type="gene ID" value="ENSSSCG00055023005.1"/>
</dbReference>
<dbReference type="Ensembl" id="ENSSSCT00055045479.1">
    <property type="protein sequence ID" value="ENSSSCP00055036250.1"/>
    <property type="gene ID" value="ENSSSCG00055023005.1"/>
</dbReference>
<dbReference type="Ensembl" id="ENSSSCT00060093870.1">
    <property type="protein sequence ID" value="ENSSSCP00060040612.1"/>
    <property type="gene ID" value="ENSSSCG00060068749.1"/>
</dbReference>
<dbReference type="Ensembl" id="ENSSSCT00065095464.1">
    <property type="protein sequence ID" value="ENSSSCP00065041775.1"/>
    <property type="gene ID" value="ENSSSCG00065069526.1"/>
</dbReference>
<dbReference type="Ensembl" id="ENSSSCT00070016339.1">
    <property type="protein sequence ID" value="ENSSSCP00070013531.1"/>
    <property type="gene ID" value="ENSSSCG00070008417.1"/>
</dbReference>
<dbReference type="GeneID" id="397587"/>
<dbReference type="KEGG" id="ssc:397587"/>
<dbReference type="CTD" id="826"/>
<dbReference type="eggNOG" id="KOG0037">
    <property type="taxonomic scope" value="Eukaryota"/>
</dbReference>
<dbReference type="HOGENOM" id="CLU_051357_2_0_1"/>
<dbReference type="InParanoid" id="P04574"/>
<dbReference type="OMA" id="QLYSMIV"/>
<dbReference type="OrthoDB" id="186625at2759"/>
<dbReference type="TreeFam" id="TF314682"/>
<dbReference type="BRENDA" id="3.4.22.B24">
    <property type="organism ID" value="6170"/>
</dbReference>
<dbReference type="Reactome" id="R-SSC-1474228">
    <property type="pathway name" value="Degradation of the extracellular matrix"/>
</dbReference>
<dbReference type="Reactome" id="R-SSC-9856530">
    <property type="pathway name" value="High laminar flow shear stress activates signaling by PIEZO1 and PECAM1:CDH5:KDR in endothelial cells"/>
</dbReference>
<dbReference type="Reactome" id="R-SSC-9860927">
    <property type="pathway name" value="Turbulent (oscillatory, disturbed) flow shear stress activates signaling by PIEZO1 and integrins in endothelial cells"/>
</dbReference>
<dbReference type="EvolutionaryTrace" id="P04574"/>
<dbReference type="Proteomes" id="UP000008227">
    <property type="component" value="Unplaced"/>
</dbReference>
<dbReference type="Proteomes" id="UP000314985">
    <property type="component" value="Chromosome 6"/>
</dbReference>
<dbReference type="Proteomes" id="UP000694570">
    <property type="component" value="Unplaced"/>
</dbReference>
<dbReference type="Proteomes" id="UP000694571">
    <property type="component" value="Unplaced"/>
</dbReference>
<dbReference type="Proteomes" id="UP000694720">
    <property type="component" value="Unplaced"/>
</dbReference>
<dbReference type="Proteomes" id="UP000694722">
    <property type="component" value="Unplaced"/>
</dbReference>
<dbReference type="Proteomes" id="UP000694723">
    <property type="component" value="Unplaced"/>
</dbReference>
<dbReference type="Proteomes" id="UP000694724">
    <property type="component" value="Unplaced"/>
</dbReference>
<dbReference type="Proteomes" id="UP000694725">
    <property type="component" value="Unplaced"/>
</dbReference>
<dbReference type="Proteomes" id="UP000694726">
    <property type="component" value="Unplaced"/>
</dbReference>
<dbReference type="Proteomes" id="UP000694727">
    <property type="component" value="Unplaced"/>
</dbReference>
<dbReference type="Proteomes" id="UP000694728">
    <property type="component" value="Unplaced"/>
</dbReference>
<dbReference type="GO" id="GO:0110158">
    <property type="term" value="C:calpain complex"/>
    <property type="evidence" value="ECO:0000318"/>
    <property type="project" value="GO_Central"/>
</dbReference>
<dbReference type="GO" id="GO:0005737">
    <property type="term" value="C:cytoplasm"/>
    <property type="evidence" value="ECO:0000314"/>
    <property type="project" value="CAFA"/>
</dbReference>
<dbReference type="GO" id="GO:0005886">
    <property type="term" value="C:plasma membrane"/>
    <property type="evidence" value="ECO:0007669"/>
    <property type="project" value="UniProtKB-SubCell"/>
</dbReference>
<dbReference type="GO" id="GO:0005509">
    <property type="term" value="F:calcium ion binding"/>
    <property type="evidence" value="ECO:0007669"/>
    <property type="project" value="InterPro"/>
</dbReference>
<dbReference type="GO" id="GO:0004198">
    <property type="term" value="F:calcium-dependent cysteine-type endopeptidase activity"/>
    <property type="evidence" value="ECO:0000314"/>
    <property type="project" value="CAFA"/>
</dbReference>
<dbReference type="GO" id="GO:0006508">
    <property type="term" value="P:proteolysis"/>
    <property type="evidence" value="ECO:0000314"/>
    <property type="project" value="CAFA"/>
</dbReference>
<dbReference type="CDD" id="cd16188">
    <property type="entry name" value="EFh_PEF_CPNS1_2"/>
    <property type="match status" value="1"/>
</dbReference>
<dbReference type="FunFam" id="1.10.238.10:FF:000136">
    <property type="entry name" value="Calpain small subunit 1"/>
    <property type="match status" value="1"/>
</dbReference>
<dbReference type="Gene3D" id="1.10.238.10">
    <property type="entry name" value="EF-hand"/>
    <property type="match status" value="1"/>
</dbReference>
<dbReference type="InterPro" id="IPR011992">
    <property type="entry name" value="EF-hand-dom_pair"/>
</dbReference>
<dbReference type="InterPro" id="IPR018247">
    <property type="entry name" value="EF_Hand_1_Ca_BS"/>
</dbReference>
<dbReference type="InterPro" id="IPR002048">
    <property type="entry name" value="EF_hand_dom"/>
</dbReference>
<dbReference type="PANTHER" id="PTHR46735:SF3">
    <property type="entry name" value="CALPAIN SMALL SUBUNIT 1-RELATED"/>
    <property type="match status" value="1"/>
</dbReference>
<dbReference type="PANTHER" id="PTHR46735">
    <property type="entry name" value="CALPAIN, SMALL SUBUNIT 1 A-RELATED"/>
    <property type="match status" value="1"/>
</dbReference>
<dbReference type="SUPFAM" id="SSF47473">
    <property type="entry name" value="EF-hand"/>
    <property type="match status" value="1"/>
</dbReference>
<dbReference type="PROSITE" id="PS00018">
    <property type="entry name" value="EF_HAND_1"/>
    <property type="match status" value="2"/>
</dbReference>
<dbReference type="PROSITE" id="PS50222">
    <property type="entry name" value="EF_HAND_2"/>
    <property type="match status" value="3"/>
</dbReference>
<feature type="chain" id="PRO_0000073715" description="Calpain small subunit 1">
    <location>
        <begin position="1"/>
        <end position="266"/>
    </location>
</feature>
<feature type="domain" description="EF-hand 1; atypical" evidence="7">
    <location>
        <begin position="94"/>
        <end position="128"/>
    </location>
</feature>
<feature type="domain" description="EF-hand 2" evidence="5">
    <location>
        <begin position="137"/>
        <end position="170"/>
    </location>
</feature>
<feature type="domain" description="EF-hand 3" evidence="5">
    <location>
        <begin position="167"/>
        <end position="202"/>
    </location>
</feature>
<feature type="domain" description="EF-hand 4" evidence="7">
    <location>
        <begin position="203"/>
        <end position="231"/>
    </location>
</feature>
<feature type="domain" description="EF-hand 5" evidence="5">
    <location>
        <begin position="232"/>
        <end position="266"/>
    </location>
</feature>
<feature type="binding site" evidence="4">
    <location>
        <position position="107"/>
    </location>
    <ligand>
        <name>Ca(2+)</name>
        <dbReference type="ChEBI" id="CHEBI:29108"/>
        <label>1</label>
    </ligand>
</feature>
<feature type="binding site" evidence="4">
    <location>
        <position position="110"/>
    </location>
    <ligand>
        <name>Ca(2+)</name>
        <dbReference type="ChEBI" id="CHEBI:29108"/>
        <label>1</label>
    </ligand>
</feature>
<feature type="binding site" evidence="4">
    <location>
        <position position="112"/>
    </location>
    <ligand>
        <name>Ca(2+)</name>
        <dbReference type="ChEBI" id="CHEBI:29108"/>
        <label>1</label>
    </ligand>
</feature>
<feature type="binding site" evidence="4">
    <location>
        <position position="117"/>
    </location>
    <ligand>
        <name>Ca(2+)</name>
        <dbReference type="ChEBI" id="CHEBI:29108"/>
        <label>1</label>
    </ligand>
</feature>
<feature type="binding site" evidence="4">
    <location>
        <position position="135"/>
    </location>
    <ligand>
        <name>Ca(2+)</name>
        <dbReference type="ChEBI" id="CHEBI:29108"/>
        <label>4</label>
    </ligand>
</feature>
<feature type="binding site" evidence="5">
    <location>
        <position position="150"/>
    </location>
    <ligand>
        <name>Ca(2+)</name>
        <dbReference type="ChEBI" id="CHEBI:29108"/>
        <label>2</label>
    </ligand>
</feature>
<feature type="binding site" evidence="5">
    <location>
        <position position="152"/>
    </location>
    <ligand>
        <name>Ca(2+)</name>
        <dbReference type="ChEBI" id="CHEBI:29108"/>
        <label>2</label>
    </ligand>
</feature>
<feature type="binding site" evidence="4 5">
    <location>
        <position position="154"/>
    </location>
    <ligand>
        <name>Ca(2+)</name>
        <dbReference type="ChEBI" id="CHEBI:29108"/>
        <label>2</label>
    </ligand>
</feature>
<feature type="binding site" evidence="4 5">
    <location>
        <position position="156"/>
    </location>
    <ligand>
        <name>Ca(2+)</name>
        <dbReference type="ChEBI" id="CHEBI:29108"/>
        <label>2</label>
    </ligand>
</feature>
<feature type="binding site" evidence="5">
    <location>
        <position position="161"/>
    </location>
    <ligand>
        <name>Ca(2+)</name>
        <dbReference type="ChEBI" id="CHEBI:29108"/>
        <label>2</label>
    </ligand>
</feature>
<feature type="binding site" evidence="5">
    <location>
        <position position="180"/>
    </location>
    <ligand>
        <name>Ca(2+)</name>
        <dbReference type="ChEBI" id="CHEBI:29108"/>
        <label>3</label>
    </ligand>
</feature>
<feature type="binding site" evidence="5">
    <location>
        <position position="182"/>
    </location>
    <ligand>
        <name>Ca(2+)</name>
        <dbReference type="ChEBI" id="CHEBI:29108"/>
        <label>3</label>
    </ligand>
</feature>
<feature type="binding site" evidence="4 5">
    <location>
        <position position="184"/>
    </location>
    <ligand>
        <name>Ca(2+)</name>
        <dbReference type="ChEBI" id="CHEBI:29108"/>
        <label>3</label>
    </ligand>
</feature>
<feature type="binding site" evidence="4 5">
    <location>
        <position position="186"/>
    </location>
    <ligand>
        <name>Ca(2+)</name>
        <dbReference type="ChEBI" id="CHEBI:29108"/>
        <label>3</label>
    </ligand>
</feature>
<feature type="binding site" evidence="5">
    <location>
        <position position="191"/>
    </location>
    <ligand>
        <name>Ca(2+)</name>
        <dbReference type="ChEBI" id="CHEBI:29108"/>
        <label>3</label>
    </ligand>
</feature>
<feature type="binding site" evidence="4">
    <location>
        <position position="223"/>
    </location>
    <ligand>
        <name>Ca(2+)</name>
        <dbReference type="ChEBI" id="CHEBI:29108"/>
        <label>4</label>
    </ligand>
</feature>
<feature type="modified residue" description="N-acetylmethionine" evidence="3">
    <location>
        <position position="1"/>
    </location>
</feature>
<feature type="modified residue" description="Phosphoserine" evidence="3">
    <location>
        <position position="6"/>
    </location>
</feature>
<feature type="modified residue" description="N6-acetyllysine" evidence="3">
    <location>
        <position position="177"/>
    </location>
</feature>
<feature type="helix" evidence="9">
    <location>
        <begin position="95"/>
        <end position="107"/>
    </location>
</feature>
<feature type="turn" evidence="9">
    <location>
        <begin position="108"/>
        <end position="111"/>
    </location>
</feature>
<feature type="helix" evidence="9">
    <location>
        <begin position="115"/>
        <end position="127"/>
    </location>
</feature>
<feature type="helix" evidence="9">
    <location>
        <begin position="139"/>
        <end position="149"/>
    </location>
</feature>
<feature type="strand" evidence="9">
    <location>
        <begin position="154"/>
        <end position="157"/>
    </location>
</feature>
<feature type="helix" evidence="9">
    <location>
        <begin position="159"/>
        <end position="179"/>
    </location>
</feature>
<feature type="strand" evidence="9">
    <location>
        <begin position="185"/>
        <end position="188"/>
    </location>
</feature>
<feature type="turn" evidence="9">
    <location>
        <begin position="189"/>
        <end position="191"/>
    </location>
</feature>
<feature type="helix" evidence="9">
    <location>
        <begin position="192"/>
        <end position="198"/>
    </location>
</feature>
<feature type="helix" evidence="9">
    <location>
        <begin position="205"/>
        <end position="215"/>
    </location>
</feature>
<feature type="strand" evidence="9">
    <location>
        <begin position="220"/>
        <end position="222"/>
    </location>
</feature>
<feature type="helix" evidence="9">
    <location>
        <begin position="224"/>
        <end position="244"/>
    </location>
</feature>
<feature type="strand" evidence="8">
    <location>
        <begin position="245"/>
        <end position="247"/>
    </location>
</feature>
<feature type="strand" evidence="9">
    <location>
        <begin position="250"/>
        <end position="255"/>
    </location>
</feature>
<feature type="helix" evidence="9">
    <location>
        <begin position="256"/>
        <end position="264"/>
    </location>
</feature>